<comment type="function">
    <text evidence="1">Catalyzes the reversible transfer of the terminal phosphate of ATP to form a long-chain polyphosphate (polyP).</text>
</comment>
<comment type="catalytic activity">
    <reaction evidence="1">
        <text>[phosphate](n) + ATP = [phosphate](n+1) + ADP</text>
        <dbReference type="Rhea" id="RHEA:19573"/>
        <dbReference type="Rhea" id="RHEA-COMP:9859"/>
        <dbReference type="Rhea" id="RHEA-COMP:14280"/>
        <dbReference type="ChEBI" id="CHEBI:16838"/>
        <dbReference type="ChEBI" id="CHEBI:30616"/>
        <dbReference type="ChEBI" id="CHEBI:456216"/>
        <dbReference type="EC" id="2.7.4.1"/>
    </reaction>
</comment>
<comment type="cofactor">
    <cofactor evidence="1">
        <name>Mg(2+)</name>
        <dbReference type="ChEBI" id="CHEBI:18420"/>
    </cofactor>
</comment>
<comment type="PTM">
    <text evidence="1">An intermediate of this reaction is the autophosphorylated ppk in which a phosphate is covalently linked to a histidine residue through a N-P bond.</text>
</comment>
<comment type="similarity">
    <text evidence="1">Belongs to the polyphosphate kinase 1 (PPK1) family.</text>
</comment>
<dbReference type="EC" id="2.7.4.1" evidence="1"/>
<dbReference type="EMBL" id="AF421132">
    <property type="protein sequence ID" value="AAL16921.1"/>
    <property type="molecule type" value="Genomic_DNA"/>
</dbReference>
<dbReference type="SMR" id="Q93AK9"/>
<dbReference type="GO" id="GO:0009358">
    <property type="term" value="C:polyphosphate kinase complex"/>
    <property type="evidence" value="ECO:0007669"/>
    <property type="project" value="InterPro"/>
</dbReference>
<dbReference type="GO" id="GO:0005524">
    <property type="term" value="F:ATP binding"/>
    <property type="evidence" value="ECO:0007669"/>
    <property type="project" value="UniProtKB-KW"/>
</dbReference>
<dbReference type="GO" id="GO:0046872">
    <property type="term" value="F:metal ion binding"/>
    <property type="evidence" value="ECO:0007669"/>
    <property type="project" value="UniProtKB-KW"/>
</dbReference>
<dbReference type="GO" id="GO:0008976">
    <property type="term" value="F:polyphosphate kinase activity"/>
    <property type="evidence" value="ECO:0007669"/>
    <property type="project" value="UniProtKB-EC"/>
</dbReference>
<dbReference type="GO" id="GO:0006799">
    <property type="term" value="P:polyphosphate biosynthetic process"/>
    <property type="evidence" value="ECO:0007669"/>
    <property type="project" value="InterPro"/>
</dbReference>
<dbReference type="Gene3D" id="3.30.870.10">
    <property type="entry name" value="Endonuclease Chain A"/>
    <property type="match status" value="1"/>
</dbReference>
<dbReference type="Gene3D" id="3.30.1840.10">
    <property type="entry name" value="Polyphosphate kinase middle domain"/>
    <property type="match status" value="1"/>
</dbReference>
<dbReference type="InterPro" id="IPR003414">
    <property type="entry name" value="PP_kinase"/>
</dbReference>
<dbReference type="InterPro" id="IPR041108">
    <property type="entry name" value="PP_kinase_C_1"/>
</dbReference>
<dbReference type="InterPro" id="IPR024953">
    <property type="entry name" value="PP_kinase_middle"/>
</dbReference>
<dbReference type="InterPro" id="IPR036830">
    <property type="entry name" value="PP_kinase_middle_dom_sf"/>
</dbReference>
<dbReference type="InterPro" id="IPR025198">
    <property type="entry name" value="PPK_N_dom"/>
</dbReference>
<dbReference type="InterPro" id="IPR036832">
    <property type="entry name" value="PPK_N_dom_sf"/>
</dbReference>
<dbReference type="PANTHER" id="PTHR30218">
    <property type="entry name" value="POLYPHOSPHATE KINASE"/>
    <property type="match status" value="1"/>
</dbReference>
<dbReference type="PANTHER" id="PTHR30218:SF0">
    <property type="entry name" value="POLYPHOSPHATE KINASE"/>
    <property type="match status" value="1"/>
</dbReference>
<dbReference type="Pfam" id="PF02503">
    <property type="entry name" value="PP_kinase"/>
    <property type="match status" value="1"/>
</dbReference>
<dbReference type="Pfam" id="PF17941">
    <property type="entry name" value="PP_kinase_C_1"/>
    <property type="match status" value="1"/>
</dbReference>
<dbReference type="Pfam" id="PF13089">
    <property type="entry name" value="PP_kinase_N"/>
    <property type="match status" value="1"/>
</dbReference>
<dbReference type="SUPFAM" id="SSF56024">
    <property type="entry name" value="Phospholipase D/nuclease"/>
    <property type="match status" value="1"/>
</dbReference>
<dbReference type="SUPFAM" id="SSF143724">
    <property type="entry name" value="PHP14-like"/>
    <property type="match status" value="1"/>
</dbReference>
<dbReference type="SUPFAM" id="SSF140356">
    <property type="entry name" value="PPK N-terminal domain-like"/>
    <property type="match status" value="1"/>
</dbReference>
<sequence length="387" mass="44024">VFHGGVAGLKQQVEATVNLLTTDGRTPQKQLDDIRLHLHPQLKKQNTEFQEVLQPLLRQQGICILDYIELNQQQRNYLDNYFQEQIFPVLTPLAVDPSHPFPHISNLSLNLAVVVKNPDTEEEFFARVKVPQVLPRFLPLPPELRTEDNGKTANWSGIPLEQAIAHNLESLFPGMSIQEYHPFRITRDADLELEEDEAEDLLLAIEQELRKRGMGGTPVRLEIRSQTPESIRSRLLQDLGLTENDIYEVDGLLGLRDLMYFLLLPLPDLKDPPRQSVVPSRLQRLKEPCINPDVPEPEDGKDFFSVIREKDLLVHHPYQSFSGTVVRFITSAAHDPNVLAMKMTLYRTSGDSPIVNALIAAAENGKQVSVLVELKARFDEENNIYWA</sequence>
<organism>
    <name type="scientific">Aphanizomenon baltica</name>
    <dbReference type="NCBI Taxonomy" id="173580"/>
    <lineage>
        <taxon>Bacteria</taxon>
        <taxon>Bacillati</taxon>
        <taxon>Cyanobacteriota</taxon>
        <taxon>Cyanophyceae</taxon>
        <taxon>Nostocales</taxon>
        <taxon>Aphanizomenonaceae</taxon>
        <taxon>Aphanizomenon</taxon>
    </lineage>
</organism>
<keyword id="KW-0067">ATP-binding</keyword>
<keyword id="KW-0418">Kinase</keyword>
<keyword id="KW-0460">Magnesium</keyword>
<keyword id="KW-0479">Metal-binding</keyword>
<keyword id="KW-0547">Nucleotide-binding</keyword>
<keyword id="KW-0597">Phosphoprotein</keyword>
<keyword id="KW-0808">Transferase</keyword>
<accession>Q93AK9</accession>
<proteinExistence type="inferred from homology"/>
<gene>
    <name type="primary">ppk</name>
</gene>
<evidence type="ECO:0000250" key="1">
    <source>
        <dbReference type="UniProtKB" id="P0A7B1"/>
    </source>
</evidence>
<reference key="1">
    <citation type="submission" date="2001-09" db="EMBL/GenBank/DDBJ databases">
        <title>Aphanizomenon baltica polyphosphate kinase (ppk) partial sequence.</title>
        <authorList>
            <person name="Singer A."/>
            <person name="Soderback E."/>
        </authorList>
    </citation>
    <scope>NUCLEOTIDE SEQUENCE [GENOMIC DNA]</scope>
</reference>
<protein>
    <recommendedName>
        <fullName evidence="1">Polyphosphate kinase</fullName>
        <ecNumber evidence="1">2.7.4.1</ecNumber>
    </recommendedName>
    <alternativeName>
        <fullName evidence="1">ATP-polyphosphate phosphotransferase</fullName>
    </alternativeName>
    <alternativeName>
        <fullName evidence="1">Polyphosphoric acid kinase</fullName>
    </alternativeName>
</protein>
<name>PPK1_APHBL</name>
<feature type="chain" id="PRO_0000128632" description="Polyphosphate kinase">
    <location>
        <begin position="1" status="less than"/>
        <end position="387" status="greater than"/>
    </location>
</feature>
<feature type="binding site" evidence="1">
    <location>
        <position position="347"/>
    </location>
    <ligand>
        <name>Mg(2+)</name>
        <dbReference type="ChEBI" id="CHEBI:18420"/>
    </ligand>
</feature>
<feature type="binding site" evidence="1">
    <location>
        <position position="377"/>
    </location>
    <ligand>
        <name>Mg(2+)</name>
        <dbReference type="ChEBI" id="CHEBI:18420"/>
    </ligand>
</feature>
<feature type="non-terminal residue">
    <location>
        <position position="1"/>
    </location>
</feature>
<feature type="non-terminal residue">
    <location>
        <position position="387"/>
    </location>
</feature>